<keyword id="KW-0150">Chloroplast</keyword>
<keyword id="KW-0472">Membrane</keyword>
<keyword id="KW-0489">Methyltransferase</keyword>
<keyword id="KW-0934">Plastid</keyword>
<keyword id="KW-1001">Plastid inner membrane</keyword>
<keyword id="KW-1185">Reference proteome</keyword>
<keyword id="KW-0949">S-adenosyl-L-methionine</keyword>
<keyword id="KW-0808">Transferase</keyword>
<keyword id="KW-0809">Transit peptide</keyword>
<keyword id="KW-0812">Transmembrane</keyword>
<keyword id="KW-1133">Transmembrane helix</keyword>
<dbReference type="EC" id="2.1.1.295"/>
<dbReference type="EMBL" id="DP000011">
    <property type="protein sequence ID" value="ABA99849.2"/>
    <property type="molecule type" value="Genomic_DNA"/>
</dbReference>
<dbReference type="EMBL" id="AP008218">
    <property type="protein sequence ID" value="BAF30293.1"/>
    <property type="molecule type" value="Genomic_DNA"/>
</dbReference>
<dbReference type="EMBL" id="AP014968">
    <property type="protein sequence ID" value="BAT18091.1"/>
    <property type="molecule type" value="Genomic_DNA"/>
</dbReference>
<dbReference type="EMBL" id="CM000149">
    <property type="protein sequence ID" value="EAZ21221.1"/>
    <property type="molecule type" value="Genomic_DNA"/>
</dbReference>
<dbReference type="EMBL" id="AK072988">
    <property type="protein sequence ID" value="BAG93239.1"/>
    <property type="molecule type" value="mRNA"/>
</dbReference>
<dbReference type="EMBL" id="AK104295">
    <property type="protein sequence ID" value="BAG96579.1"/>
    <property type="molecule type" value="mRNA"/>
</dbReference>
<dbReference type="EMBL" id="AK105795">
    <property type="protein sequence ID" value="BAG97369.1"/>
    <property type="molecule type" value="mRNA"/>
</dbReference>
<dbReference type="RefSeq" id="XP_015619522.1">
    <property type="nucleotide sequence ID" value="XM_015764036.1"/>
</dbReference>
<dbReference type="SMR" id="Q2QM69"/>
<dbReference type="FunCoup" id="Q2QM69">
    <property type="interactions" value="1084"/>
</dbReference>
<dbReference type="STRING" id="39947.Q2QM69"/>
<dbReference type="PaxDb" id="39947-Q2QM69"/>
<dbReference type="EnsemblPlants" id="Os12t0615400-01">
    <property type="protein sequence ID" value="Os12t0615400-01"/>
    <property type="gene ID" value="Os12g0615400"/>
</dbReference>
<dbReference type="Gramene" id="Os12t0615400-01">
    <property type="protein sequence ID" value="Os12t0615400-01"/>
    <property type="gene ID" value="Os12g0615400"/>
</dbReference>
<dbReference type="KEGG" id="dosa:Os12g0615400"/>
<dbReference type="eggNOG" id="KOG1540">
    <property type="taxonomic scope" value="Eukaryota"/>
</dbReference>
<dbReference type="HOGENOM" id="CLU_051421_0_0_1"/>
<dbReference type="InParanoid" id="Q2QM69"/>
<dbReference type="OMA" id="FNRFPTE"/>
<dbReference type="OrthoDB" id="10017101at2759"/>
<dbReference type="UniPathway" id="UPA00160"/>
<dbReference type="Proteomes" id="UP000000763">
    <property type="component" value="Chromosome 12"/>
</dbReference>
<dbReference type="Proteomes" id="UP000007752">
    <property type="component" value="Chromosome 12"/>
</dbReference>
<dbReference type="Proteomes" id="UP000059680">
    <property type="component" value="Chromosome 12"/>
</dbReference>
<dbReference type="GO" id="GO:0009706">
    <property type="term" value="C:chloroplast inner membrane"/>
    <property type="evidence" value="ECO:0007669"/>
    <property type="project" value="UniProtKB-SubCell"/>
</dbReference>
<dbReference type="GO" id="GO:0102550">
    <property type="term" value="F:2-methyl-6-geranylgeranyl-1,4-benzoquinol methyltransferase activity"/>
    <property type="evidence" value="ECO:0007669"/>
    <property type="project" value="UniProtKB-EC"/>
</dbReference>
<dbReference type="GO" id="GO:0051741">
    <property type="term" value="F:2-methyl-6-phytyl-1,4-benzoquinone methyltransferase activity"/>
    <property type="evidence" value="ECO:0007669"/>
    <property type="project" value="InterPro"/>
</dbReference>
<dbReference type="GO" id="GO:0051742">
    <property type="term" value="F:2-methyl-6-solanyl-1,4-benzoquinone methyltransferase activity"/>
    <property type="evidence" value="ECO:0007669"/>
    <property type="project" value="RHEA"/>
</dbReference>
<dbReference type="GO" id="GO:0032259">
    <property type="term" value="P:methylation"/>
    <property type="evidence" value="ECO:0007669"/>
    <property type="project" value="UniProtKB-KW"/>
</dbReference>
<dbReference type="GO" id="GO:0010189">
    <property type="term" value="P:vitamin E biosynthetic process"/>
    <property type="evidence" value="ECO:0007669"/>
    <property type="project" value="UniProtKB-UniPathway"/>
</dbReference>
<dbReference type="CDD" id="cd02440">
    <property type="entry name" value="AdoMet_MTases"/>
    <property type="match status" value="1"/>
</dbReference>
<dbReference type="Gene3D" id="3.40.50.150">
    <property type="entry name" value="Vaccinia Virus protein VP39"/>
    <property type="match status" value="1"/>
</dbReference>
<dbReference type="InterPro" id="IPR013216">
    <property type="entry name" value="Methyltransf_11"/>
</dbReference>
<dbReference type="InterPro" id="IPR044649">
    <property type="entry name" value="MPBQ/MSBQ_MT"/>
</dbReference>
<dbReference type="InterPro" id="IPR029063">
    <property type="entry name" value="SAM-dependent_MTases_sf"/>
</dbReference>
<dbReference type="InterPro" id="IPR031164">
    <property type="entry name" value="SAM_MPBQ_MSBQ_MT"/>
</dbReference>
<dbReference type="PANTHER" id="PTHR44516:SF11">
    <property type="entry name" value="2-METHYL-6-PHYTYL-1,4-HYDROQUINONE METHYLTRANSFERASE 2, CHLOROPLASTIC"/>
    <property type="match status" value="1"/>
</dbReference>
<dbReference type="PANTHER" id="PTHR44516">
    <property type="entry name" value="2-METHYL-6-PHYTYL-1,4-HYDROQUINONE METHYLTRANSFERASE, CHLOROPLASTIC"/>
    <property type="match status" value="1"/>
</dbReference>
<dbReference type="Pfam" id="PF08241">
    <property type="entry name" value="Methyltransf_11"/>
    <property type="match status" value="1"/>
</dbReference>
<dbReference type="SUPFAM" id="SSF53335">
    <property type="entry name" value="S-adenosyl-L-methionine-dependent methyltransferases"/>
    <property type="match status" value="1"/>
</dbReference>
<dbReference type="PROSITE" id="PS51734">
    <property type="entry name" value="SAM_MPBQ_MSBQ_MT"/>
    <property type="match status" value="1"/>
</dbReference>
<gene>
    <name type="ordered locus">Os12g0615400</name>
    <name type="ordered locus">LOC_Os12g42090</name>
    <name type="ORF">OsJ_36874</name>
</gene>
<reference key="1">
    <citation type="journal article" date="2005" name="BMC Biol.">
        <title>The sequence of rice chromosomes 11 and 12, rich in disease resistance genes and recent gene duplications.</title>
        <authorList>
            <consortium name="The rice chromosomes 11 and 12 sequencing consortia"/>
        </authorList>
    </citation>
    <scope>NUCLEOTIDE SEQUENCE [LARGE SCALE GENOMIC DNA]</scope>
    <source>
        <strain>cv. Nipponbare</strain>
    </source>
</reference>
<reference key="2">
    <citation type="journal article" date="2005" name="Nature">
        <title>The map-based sequence of the rice genome.</title>
        <authorList>
            <consortium name="International rice genome sequencing project (IRGSP)"/>
        </authorList>
    </citation>
    <scope>NUCLEOTIDE SEQUENCE [LARGE SCALE GENOMIC DNA]</scope>
    <source>
        <strain>cv. Nipponbare</strain>
    </source>
</reference>
<reference key="3">
    <citation type="journal article" date="2008" name="Nucleic Acids Res.">
        <title>The rice annotation project database (RAP-DB): 2008 update.</title>
        <authorList>
            <consortium name="The rice annotation project (RAP)"/>
        </authorList>
    </citation>
    <scope>GENOME REANNOTATION</scope>
    <source>
        <strain>cv. Nipponbare</strain>
    </source>
</reference>
<reference key="4">
    <citation type="journal article" date="2013" name="Rice">
        <title>Improvement of the Oryza sativa Nipponbare reference genome using next generation sequence and optical map data.</title>
        <authorList>
            <person name="Kawahara Y."/>
            <person name="de la Bastide M."/>
            <person name="Hamilton J.P."/>
            <person name="Kanamori H."/>
            <person name="McCombie W.R."/>
            <person name="Ouyang S."/>
            <person name="Schwartz D.C."/>
            <person name="Tanaka T."/>
            <person name="Wu J."/>
            <person name="Zhou S."/>
            <person name="Childs K.L."/>
            <person name="Davidson R.M."/>
            <person name="Lin H."/>
            <person name="Quesada-Ocampo L."/>
            <person name="Vaillancourt B."/>
            <person name="Sakai H."/>
            <person name="Lee S.S."/>
            <person name="Kim J."/>
            <person name="Numa H."/>
            <person name="Itoh T."/>
            <person name="Buell C.R."/>
            <person name="Matsumoto T."/>
        </authorList>
    </citation>
    <scope>GENOME REANNOTATION</scope>
    <source>
        <strain>cv. Nipponbare</strain>
    </source>
</reference>
<reference key="5">
    <citation type="journal article" date="2005" name="PLoS Biol.">
        <title>The genomes of Oryza sativa: a history of duplications.</title>
        <authorList>
            <person name="Yu J."/>
            <person name="Wang J."/>
            <person name="Lin W."/>
            <person name="Li S."/>
            <person name="Li H."/>
            <person name="Zhou J."/>
            <person name="Ni P."/>
            <person name="Dong W."/>
            <person name="Hu S."/>
            <person name="Zeng C."/>
            <person name="Zhang J."/>
            <person name="Zhang Y."/>
            <person name="Li R."/>
            <person name="Xu Z."/>
            <person name="Li S."/>
            <person name="Li X."/>
            <person name="Zheng H."/>
            <person name="Cong L."/>
            <person name="Lin L."/>
            <person name="Yin J."/>
            <person name="Geng J."/>
            <person name="Li G."/>
            <person name="Shi J."/>
            <person name="Liu J."/>
            <person name="Lv H."/>
            <person name="Li J."/>
            <person name="Wang J."/>
            <person name="Deng Y."/>
            <person name="Ran L."/>
            <person name="Shi X."/>
            <person name="Wang X."/>
            <person name="Wu Q."/>
            <person name="Li C."/>
            <person name="Ren X."/>
            <person name="Wang J."/>
            <person name="Wang X."/>
            <person name="Li D."/>
            <person name="Liu D."/>
            <person name="Zhang X."/>
            <person name="Ji Z."/>
            <person name="Zhao W."/>
            <person name="Sun Y."/>
            <person name="Zhang Z."/>
            <person name="Bao J."/>
            <person name="Han Y."/>
            <person name="Dong L."/>
            <person name="Ji J."/>
            <person name="Chen P."/>
            <person name="Wu S."/>
            <person name="Liu J."/>
            <person name="Xiao Y."/>
            <person name="Bu D."/>
            <person name="Tan J."/>
            <person name="Yang L."/>
            <person name="Ye C."/>
            <person name="Zhang J."/>
            <person name="Xu J."/>
            <person name="Zhou Y."/>
            <person name="Yu Y."/>
            <person name="Zhang B."/>
            <person name="Zhuang S."/>
            <person name="Wei H."/>
            <person name="Liu B."/>
            <person name="Lei M."/>
            <person name="Yu H."/>
            <person name="Li Y."/>
            <person name="Xu H."/>
            <person name="Wei S."/>
            <person name="He X."/>
            <person name="Fang L."/>
            <person name="Zhang Z."/>
            <person name="Zhang Y."/>
            <person name="Huang X."/>
            <person name="Su Z."/>
            <person name="Tong W."/>
            <person name="Li J."/>
            <person name="Tong Z."/>
            <person name="Li S."/>
            <person name="Ye J."/>
            <person name="Wang L."/>
            <person name="Fang L."/>
            <person name="Lei T."/>
            <person name="Chen C.-S."/>
            <person name="Chen H.-C."/>
            <person name="Xu Z."/>
            <person name="Li H."/>
            <person name="Huang H."/>
            <person name="Zhang F."/>
            <person name="Xu H."/>
            <person name="Li N."/>
            <person name="Zhao C."/>
            <person name="Li S."/>
            <person name="Dong L."/>
            <person name="Huang Y."/>
            <person name="Li L."/>
            <person name="Xi Y."/>
            <person name="Qi Q."/>
            <person name="Li W."/>
            <person name="Zhang B."/>
            <person name="Hu W."/>
            <person name="Zhang Y."/>
            <person name="Tian X."/>
            <person name="Jiao Y."/>
            <person name="Liang X."/>
            <person name="Jin J."/>
            <person name="Gao L."/>
            <person name="Zheng W."/>
            <person name="Hao B."/>
            <person name="Liu S.-M."/>
            <person name="Wang W."/>
            <person name="Yuan L."/>
            <person name="Cao M."/>
            <person name="McDermott J."/>
            <person name="Samudrala R."/>
            <person name="Wang J."/>
            <person name="Wong G.K.-S."/>
            <person name="Yang H."/>
        </authorList>
    </citation>
    <scope>NUCLEOTIDE SEQUENCE [LARGE SCALE GENOMIC DNA]</scope>
    <source>
        <strain>cv. Nipponbare</strain>
    </source>
</reference>
<reference key="6">
    <citation type="journal article" date="2003" name="Science">
        <title>Collection, mapping, and annotation of over 28,000 cDNA clones from japonica rice.</title>
        <authorList>
            <consortium name="The rice full-length cDNA consortium"/>
        </authorList>
    </citation>
    <scope>NUCLEOTIDE SEQUENCE [LARGE SCALE MRNA]</scope>
    <source>
        <strain>cv. Nipponbare</strain>
    </source>
</reference>
<organism>
    <name type="scientific">Oryza sativa subsp. japonica</name>
    <name type="common">Rice</name>
    <dbReference type="NCBI Taxonomy" id="39947"/>
    <lineage>
        <taxon>Eukaryota</taxon>
        <taxon>Viridiplantae</taxon>
        <taxon>Streptophyta</taxon>
        <taxon>Embryophyta</taxon>
        <taxon>Tracheophyta</taxon>
        <taxon>Spermatophyta</taxon>
        <taxon>Magnoliopsida</taxon>
        <taxon>Liliopsida</taxon>
        <taxon>Poales</taxon>
        <taxon>Poaceae</taxon>
        <taxon>BOP clade</taxon>
        <taxon>Oryzoideae</taxon>
        <taxon>Oryzeae</taxon>
        <taxon>Oryzinae</taxon>
        <taxon>Oryza</taxon>
        <taxon>Oryza sativa</taxon>
    </lineage>
</organism>
<name>BQMT2_ORYSJ</name>
<evidence type="ECO:0000250" key="1"/>
<evidence type="ECO:0000255" key="2"/>
<evidence type="ECO:0000255" key="3">
    <source>
        <dbReference type="PROSITE-ProRule" id="PRU01069"/>
    </source>
</evidence>
<evidence type="ECO:0000256" key="4">
    <source>
        <dbReference type="SAM" id="MobiDB-lite"/>
    </source>
</evidence>
<proteinExistence type="evidence at transcript level"/>
<sequence>MAMASSAYAPAGGVGTHSAPGRIRPPRGLGFSTTTTKSRPLVLTRRGGGGGNISVARLRCAASSSSAAARPMSQPRFIQHKKEAFWFYRFLSIVYDHVINPGHWTEDMRDDALEPADLYSRKLRVVDVGGGTGFTTLGIVKRVDPENVTLLDQSPHQLEKAREKEALKGVTIMEGDAEDLPFPTDTFDRYVSAGSIEYWPDPQRGIKEAYRVLRLGGVACMIGPVHPTFWLSRFFADMWMLFPKEEEYIEWFKKAGFKDVKLKRIGPKWYRGVRRHGLIMGCSVTGVKREHGDSPLQLGPKVEDVSKPVNPITFLFRFLMGTICAAYYVLVPIYMWIKDQIVPKGMPI</sequence>
<feature type="transit peptide" description="Chloroplast" evidence="2">
    <location>
        <begin position="1"/>
        <end position="59"/>
    </location>
</feature>
<feature type="chain" id="PRO_0000422878" description="2-methyl-6-phytyl-1,4-hydroquinone methyltransferase 2, chloroplastic">
    <location>
        <begin position="60"/>
        <end position="348"/>
    </location>
</feature>
<feature type="topological domain" description="Chloroplast intermembrane" evidence="2">
    <location>
        <begin position="60"/>
        <end position="317"/>
    </location>
</feature>
<feature type="transmembrane region" description="Helical" evidence="2">
    <location>
        <begin position="318"/>
        <end position="338"/>
    </location>
</feature>
<feature type="topological domain" description="Stromal" evidence="2">
    <location>
        <begin position="339"/>
        <end position="348"/>
    </location>
</feature>
<feature type="region of interest" description="Disordered" evidence="4">
    <location>
        <begin position="1"/>
        <end position="48"/>
    </location>
</feature>
<feature type="region of interest" description="SAM motif I" evidence="3">
    <location>
        <begin position="125"/>
        <end position="134"/>
    </location>
</feature>
<feature type="region of interest" description="SAM motif II" evidence="3">
    <location>
        <begin position="170"/>
        <end position="183"/>
    </location>
</feature>
<feature type="region of interest" description="SAM motif III" evidence="3">
    <location>
        <begin position="211"/>
        <end position="224"/>
    </location>
</feature>
<accession>Q2QM69</accession>
<accession>A0A0P0YD53</accession>
<comment type="function">
    <text evidence="1">Involved in a key methylation step in both tocopherols (vitamin E) and plastoquinone synthesis. Catalyzes the conversion of 2-methyl-6-phytyl-1,4-hydroquinone (MPBQ) to 2,3-dimethyl-6-phytyl-1,4-hydroquinone (DMPQ, a substrate for tocopherol cyclase), and 2-methyl-6-solanyl-1,4-benzoquinone (MSBQ) to plastoquinone (By similarity).</text>
</comment>
<comment type="catalytic activity">
    <reaction>
        <text>2-methyl-6-phytyl-1,4-benzene-1,4-diol + S-adenosyl-L-methionine = 2,3-dimethyl-6-phytylbenzene-1,4-diol + S-adenosyl-L-homocysteine + H(+)</text>
        <dbReference type="Rhea" id="RHEA:37979"/>
        <dbReference type="ChEBI" id="CHEBI:15378"/>
        <dbReference type="ChEBI" id="CHEBI:57856"/>
        <dbReference type="ChEBI" id="CHEBI:59789"/>
        <dbReference type="ChEBI" id="CHEBI:75920"/>
        <dbReference type="ChEBI" id="CHEBI:75921"/>
        <dbReference type="EC" id="2.1.1.295"/>
    </reaction>
</comment>
<comment type="catalytic activity">
    <reaction>
        <text>2-methyl-6-(all-trans-nonaprenyl)benzene-1,4-diol + S-adenosyl-L-methionine = plastoquinol-9 + S-adenosyl-L-homocysteine + H(+)</text>
        <dbReference type="Rhea" id="RHEA:37999"/>
        <dbReference type="ChEBI" id="CHEBI:15378"/>
        <dbReference type="ChEBI" id="CHEBI:28026"/>
        <dbReference type="ChEBI" id="CHEBI:57856"/>
        <dbReference type="ChEBI" id="CHEBI:59789"/>
        <dbReference type="ChEBI" id="CHEBI:75402"/>
        <dbReference type="EC" id="2.1.1.295"/>
    </reaction>
</comment>
<comment type="catalytic activity">
    <reaction>
        <text>6-geranylgeranyl-2-methylbenzene-1,4-diol + S-adenosyl-L-methionine = 6-geranylgeranyl-2,3-dimethylbenzene-1,4-diol + S-adenosyl-L-homocysteine + H(+)</text>
        <dbReference type="Rhea" id="RHEA:38007"/>
        <dbReference type="ChEBI" id="CHEBI:15378"/>
        <dbReference type="ChEBI" id="CHEBI:57856"/>
        <dbReference type="ChEBI" id="CHEBI:59789"/>
        <dbReference type="ChEBI" id="CHEBI:75411"/>
        <dbReference type="ChEBI" id="CHEBI:75412"/>
        <dbReference type="EC" id="2.1.1.295"/>
    </reaction>
</comment>
<comment type="pathway">
    <text>Cofactor biosynthesis; tocopherol biosynthesis.</text>
</comment>
<comment type="subcellular location">
    <subcellularLocation>
        <location evidence="1">Plastid</location>
        <location evidence="1">Chloroplast inner membrane</location>
        <topology evidence="1">Single-pass membrane protein</topology>
    </subcellularLocation>
</comment>
<comment type="similarity">
    <text evidence="3">Belongs to the class I-like SAM-binding methyltransferase superfamily. MPBQ/MBSQ MT family.</text>
</comment>
<protein>
    <recommendedName>
        <fullName>2-methyl-6-phytyl-1,4-hydroquinone methyltransferase 2, chloroplastic</fullName>
        <ecNumber>2.1.1.295</ecNumber>
    </recommendedName>
    <alternativeName>
        <fullName>37 kDa inner envelope membrane protein</fullName>
        <shortName>E37</shortName>
    </alternativeName>
    <alternativeName>
        <fullName>MPBQ/MSBQ methyltransferase</fullName>
    </alternativeName>
    <alternativeName>
        <fullName>Protein VTE3 homolog</fullName>
    </alternativeName>
</protein>